<gene>
    <name evidence="6" type="primary">UGT72E1</name>
    <name evidence="8" type="ordered locus">At3g50740</name>
    <name evidence="9" type="ORF">F18B3.20</name>
</gene>
<evidence type="ECO:0000250" key="1">
    <source>
        <dbReference type="UniProtKB" id="A0A0A1HA03"/>
    </source>
</evidence>
<evidence type="ECO:0000250" key="2">
    <source>
        <dbReference type="UniProtKB" id="P51094"/>
    </source>
</evidence>
<evidence type="ECO:0000269" key="3">
    <source>
    </source>
</evidence>
<evidence type="ECO:0000269" key="4">
    <source>
    </source>
</evidence>
<evidence type="ECO:0000269" key="5">
    <source>
    </source>
</evidence>
<evidence type="ECO:0000303" key="6">
    <source>
    </source>
</evidence>
<evidence type="ECO:0000305" key="7"/>
<evidence type="ECO:0000312" key="8">
    <source>
        <dbReference type="Araport" id="AT3G50740"/>
    </source>
</evidence>
<evidence type="ECO:0000312" key="9">
    <source>
        <dbReference type="EMBL" id="CAB42903.1"/>
    </source>
</evidence>
<feature type="chain" id="PRO_0000409073" description="UDP-glycosyltransferase 72E1">
    <location>
        <begin position="1"/>
        <end position="487"/>
    </location>
</feature>
<feature type="active site" description="Proton acceptor" evidence="1">
    <location>
        <position position="18"/>
    </location>
</feature>
<feature type="active site" description="Charge relay" evidence="1">
    <location>
        <position position="116"/>
    </location>
</feature>
<feature type="binding site" evidence="2">
    <location>
        <position position="18"/>
    </location>
    <ligand>
        <name>an anthocyanidin</name>
        <dbReference type="ChEBI" id="CHEBI:143576"/>
    </ligand>
</feature>
<feature type="binding site" evidence="1">
    <location>
        <position position="351"/>
    </location>
    <ligand>
        <name>UDP-alpha-D-glucose</name>
        <dbReference type="ChEBI" id="CHEBI:58885"/>
    </ligand>
</feature>
<feature type="binding site" evidence="1">
    <location>
        <position position="353"/>
    </location>
    <ligand>
        <name>UDP-alpha-D-glucose</name>
        <dbReference type="ChEBI" id="CHEBI:58885"/>
    </ligand>
</feature>
<feature type="binding site" evidence="1">
    <location>
        <position position="368"/>
    </location>
    <ligand>
        <name>UDP-alpha-D-glucose</name>
        <dbReference type="ChEBI" id="CHEBI:58885"/>
    </ligand>
</feature>
<feature type="binding site" evidence="1">
    <location>
        <position position="371"/>
    </location>
    <ligand>
        <name>UDP-alpha-D-glucose</name>
        <dbReference type="ChEBI" id="CHEBI:58885"/>
    </ligand>
</feature>
<feature type="binding site" evidence="1">
    <location>
        <position position="372"/>
    </location>
    <ligand>
        <name>UDP-alpha-D-glucose</name>
        <dbReference type="ChEBI" id="CHEBI:58885"/>
    </ligand>
</feature>
<feature type="binding site" evidence="1">
    <location>
        <position position="373"/>
    </location>
    <ligand>
        <name>UDP-alpha-D-glucose</name>
        <dbReference type="ChEBI" id="CHEBI:58885"/>
    </ligand>
</feature>
<feature type="binding site" evidence="1">
    <location>
        <position position="376"/>
    </location>
    <ligand>
        <name>UDP-alpha-D-glucose</name>
        <dbReference type="ChEBI" id="CHEBI:58885"/>
    </ligand>
</feature>
<feature type="binding site" evidence="2">
    <location>
        <position position="391"/>
    </location>
    <ligand>
        <name>an anthocyanidin</name>
        <dbReference type="ChEBI" id="CHEBI:143576"/>
    </ligand>
</feature>
<feature type="binding site" evidence="1">
    <location>
        <position position="392"/>
    </location>
    <ligand>
        <name>UDP-alpha-D-glucose</name>
        <dbReference type="ChEBI" id="CHEBI:58885"/>
    </ligand>
</feature>
<feature type="binding site" evidence="1">
    <location>
        <position position="393"/>
    </location>
    <ligand>
        <name>UDP-alpha-D-glucose</name>
        <dbReference type="ChEBI" id="CHEBI:58885"/>
    </ligand>
</feature>
<comment type="function">
    <text evidence="3">UDP-glycosyltransferase that glucosylates coniferyl aldehyde to form coniferyl aldehyde 4-O-glucoside (PubMed:15907484). Glucosylates sinapyl aldehyde to form sinapyl aldehyde 4-O-glucoside (PubMed:15907484). Is not active in presence of coniferyl alcohol or sinapyl alcohol (PubMed:15907484). Can glucosylate the phytotoxic xenobiotic compound 2,4,5-trichlorophenol (TCP) (PubMed:15907484).</text>
</comment>
<comment type="catalytic activity">
    <reaction evidence="3">
        <text>(E)-coniferaldehyde + UDP-alpha-D-glucose = 4-O-(beta-D-glucosyl)-4-(E)-coniferyl aldehyde + UDP + H(+)</text>
        <dbReference type="Rhea" id="RHEA:57708"/>
        <dbReference type="ChEBI" id="CHEBI:15378"/>
        <dbReference type="ChEBI" id="CHEBI:16547"/>
        <dbReference type="ChEBI" id="CHEBI:58223"/>
        <dbReference type="ChEBI" id="CHEBI:58885"/>
        <dbReference type="ChEBI" id="CHEBI:136949"/>
    </reaction>
</comment>
<comment type="catalytic activity">
    <reaction evidence="3">
        <text>(E)-sinapaldehyde + UDP-alpha-D-glucose = 4-O-(beta-D-glucosyl)-4-trans-sinapoyl aldehyde + UDP + H(+)</text>
        <dbReference type="Rhea" id="RHEA:57712"/>
        <dbReference type="ChEBI" id="CHEBI:15378"/>
        <dbReference type="ChEBI" id="CHEBI:27949"/>
        <dbReference type="ChEBI" id="CHEBI:58223"/>
        <dbReference type="ChEBI" id="CHEBI:58885"/>
        <dbReference type="ChEBI" id="CHEBI:142126"/>
    </reaction>
</comment>
<comment type="biophysicochemical properties">
    <kinetics>
        <KM evidence="3">0.27 mM for coniferyl aldehyde</KM>
        <KM evidence="3">0.46 mM for sinapyl aldehyde</KM>
    </kinetics>
</comment>
<comment type="subunit">
    <text evidence="5">Interacts with SIS8.</text>
</comment>
<comment type="subcellular location">
    <subcellularLocation>
        <location evidence="5">Nucleus</location>
    </subcellularLocation>
    <text evidence="5">Colocalizes with SIS8 in the nucleus.</text>
</comment>
<comment type="tissue specificity">
    <text evidence="4">Expressed in seedlings, roots and leaves.</text>
</comment>
<comment type="disruption phenotype">
    <text evidence="5">No visible phenotype under normal growth conditions, but mutant plants display a sugar-resistant seedling development phenotype.</text>
</comment>
<comment type="similarity">
    <text evidence="7">Belongs to the UDP-glycosyltransferase family.</text>
</comment>
<comment type="sequence caution" evidence="7">
    <conflict type="erroneous initiation">
        <sequence resource="EMBL-CDS" id="CAB42903"/>
    </conflict>
    <text>Truncated N-terminus.</text>
</comment>
<comment type="sequence caution" evidence="7">
    <conflict type="erroneous initiation">
        <sequence resource="EMBL-CDS" id="CAB62443"/>
    </conflict>
    <text>Truncated N-terminus.</text>
</comment>
<proteinExistence type="evidence at protein level"/>
<dbReference type="EC" id="2.4.1.-" evidence="3"/>
<dbReference type="EMBL" id="KJ138794">
    <property type="protein sequence ID" value="AHL38734.1"/>
    <property type="molecule type" value="mRNA"/>
</dbReference>
<dbReference type="EMBL" id="AL049862">
    <property type="protein sequence ID" value="CAB42903.1"/>
    <property type="status" value="ALT_INIT"/>
    <property type="molecule type" value="Genomic_DNA"/>
</dbReference>
<dbReference type="EMBL" id="AL132979">
    <property type="protein sequence ID" value="CAB62443.1"/>
    <property type="status" value="ALT_INIT"/>
    <property type="molecule type" value="Genomic_DNA"/>
</dbReference>
<dbReference type="EMBL" id="CP002686">
    <property type="protein sequence ID" value="AEE78703.1"/>
    <property type="molecule type" value="Genomic_DNA"/>
</dbReference>
<dbReference type="EMBL" id="AY049277">
    <property type="protein sequence ID" value="AAK83619.1"/>
    <property type="molecule type" value="mRNA"/>
</dbReference>
<dbReference type="EMBL" id="BT015770">
    <property type="protein sequence ID" value="AAU90060.1"/>
    <property type="molecule type" value="mRNA"/>
</dbReference>
<dbReference type="PIR" id="T08395">
    <property type="entry name" value="T08395"/>
</dbReference>
<dbReference type="RefSeq" id="NP_566938.1">
    <property type="nucleotide sequence ID" value="NM_114934.2"/>
</dbReference>
<dbReference type="SMR" id="Q94A84"/>
<dbReference type="BioGRID" id="9556">
    <property type="interactions" value="1"/>
</dbReference>
<dbReference type="FunCoup" id="Q94A84">
    <property type="interactions" value="404"/>
</dbReference>
<dbReference type="STRING" id="3702.Q94A84"/>
<dbReference type="CAZy" id="GT1">
    <property type="family name" value="Glycosyltransferase Family 1"/>
</dbReference>
<dbReference type="iPTMnet" id="Q94A84"/>
<dbReference type="PaxDb" id="3702-AT3G50740.1"/>
<dbReference type="ProteomicsDB" id="228620"/>
<dbReference type="EnsemblPlants" id="AT3G50740.1">
    <property type="protein sequence ID" value="AT3G50740.1"/>
    <property type="gene ID" value="AT3G50740"/>
</dbReference>
<dbReference type="GeneID" id="824238"/>
<dbReference type="Gramene" id="AT3G50740.1">
    <property type="protein sequence ID" value="AT3G50740.1"/>
    <property type="gene ID" value="AT3G50740"/>
</dbReference>
<dbReference type="KEGG" id="ath:AT3G50740"/>
<dbReference type="Araport" id="AT3G50740"/>
<dbReference type="TAIR" id="AT3G50740">
    <property type="gene designation" value="UGT72E1"/>
</dbReference>
<dbReference type="eggNOG" id="KOG1192">
    <property type="taxonomic scope" value="Eukaryota"/>
</dbReference>
<dbReference type="HOGENOM" id="CLU_001724_3_2_1"/>
<dbReference type="InParanoid" id="Q94A84"/>
<dbReference type="OMA" id="VALYFPT"/>
<dbReference type="PhylomeDB" id="Q94A84"/>
<dbReference type="BioCyc" id="ARA:AT3G50740-MONOMER"/>
<dbReference type="BioCyc" id="MetaCyc:AT3G50740-MONOMER"/>
<dbReference type="PRO" id="PR:Q94A84"/>
<dbReference type="Proteomes" id="UP000006548">
    <property type="component" value="Chromosome 3"/>
</dbReference>
<dbReference type="ExpressionAtlas" id="Q94A84">
    <property type="expression patterns" value="baseline and differential"/>
</dbReference>
<dbReference type="GO" id="GO:0005634">
    <property type="term" value="C:nucleus"/>
    <property type="evidence" value="ECO:0007669"/>
    <property type="project" value="UniProtKB-SubCell"/>
</dbReference>
<dbReference type="GO" id="GO:0047209">
    <property type="term" value="F:coniferyl-alcohol glucosyltransferase activity"/>
    <property type="evidence" value="ECO:0000314"/>
    <property type="project" value="TAIR"/>
</dbReference>
<dbReference type="GO" id="GO:0009808">
    <property type="term" value="P:lignin metabolic process"/>
    <property type="evidence" value="ECO:0000304"/>
    <property type="project" value="TAIR"/>
</dbReference>
<dbReference type="GO" id="GO:0009636">
    <property type="term" value="P:response to toxic substance"/>
    <property type="evidence" value="ECO:0007669"/>
    <property type="project" value="UniProtKB-KW"/>
</dbReference>
<dbReference type="CDD" id="cd03784">
    <property type="entry name" value="GT1_Gtf-like"/>
    <property type="match status" value="1"/>
</dbReference>
<dbReference type="FunFam" id="3.40.50.2000:FF:000051">
    <property type="entry name" value="Glycosyltransferase"/>
    <property type="match status" value="1"/>
</dbReference>
<dbReference type="FunFam" id="3.40.50.2000:FF:000054">
    <property type="entry name" value="Glycosyltransferase"/>
    <property type="match status" value="1"/>
</dbReference>
<dbReference type="Gene3D" id="3.40.50.2000">
    <property type="entry name" value="Glycogen Phosphorylase B"/>
    <property type="match status" value="2"/>
</dbReference>
<dbReference type="InterPro" id="IPR002213">
    <property type="entry name" value="UDP_glucos_trans"/>
</dbReference>
<dbReference type="InterPro" id="IPR035595">
    <property type="entry name" value="UDP_glycos_trans_CS"/>
</dbReference>
<dbReference type="PANTHER" id="PTHR48046">
    <property type="entry name" value="UDP-GLYCOSYLTRANSFERASE 72E1"/>
    <property type="match status" value="1"/>
</dbReference>
<dbReference type="PANTHER" id="PTHR48046:SF7">
    <property type="entry name" value="UDP-GLYCOSYLTRANSFERASE 72E1"/>
    <property type="match status" value="1"/>
</dbReference>
<dbReference type="Pfam" id="PF00201">
    <property type="entry name" value="UDPGT"/>
    <property type="match status" value="1"/>
</dbReference>
<dbReference type="SUPFAM" id="SSF53756">
    <property type="entry name" value="UDP-Glycosyltransferase/glycogen phosphorylase"/>
    <property type="match status" value="1"/>
</dbReference>
<dbReference type="PROSITE" id="PS00375">
    <property type="entry name" value="UDPGT"/>
    <property type="match status" value="1"/>
</dbReference>
<organism>
    <name type="scientific">Arabidopsis thaliana</name>
    <name type="common">Mouse-ear cress</name>
    <dbReference type="NCBI Taxonomy" id="3702"/>
    <lineage>
        <taxon>Eukaryota</taxon>
        <taxon>Viridiplantae</taxon>
        <taxon>Streptophyta</taxon>
        <taxon>Embryophyta</taxon>
        <taxon>Tracheophyta</taxon>
        <taxon>Spermatophyta</taxon>
        <taxon>Magnoliopsida</taxon>
        <taxon>eudicotyledons</taxon>
        <taxon>Gunneridae</taxon>
        <taxon>Pentapetalae</taxon>
        <taxon>rosids</taxon>
        <taxon>malvids</taxon>
        <taxon>Brassicales</taxon>
        <taxon>Brassicaceae</taxon>
        <taxon>Camelineae</taxon>
        <taxon>Arabidopsis</taxon>
    </lineage>
</organism>
<accession>Q94A84</accession>
<accession>Q9S7R8</accession>
<accession>W8Q6P4</accession>
<reference key="1">
    <citation type="journal article" date="2014" name="Plant J.">
        <title>The plant glycosyltransferase clone collection for functional genomics.</title>
        <authorList>
            <person name="Lao J."/>
            <person name="Oikawa A."/>
            <person name="Bromley J.R."/>
            <person name="McInerney P."/>
            <person name="Suttangkakul A."/>
            <person name="Smith-Moritz A.M."/>
            <person name="Plahar H."/>
            <person name="Chiu T.-Y."/>
            <person name="Gonzalez Fernandez-Nino S.M.G."/>
            <person name="Ebert B."/>
            <person name="Yang F."/>
            <person name="Christiansen K.M."/>
            <person name="Hansen S.F."/>
            <person name="Stonebloom S."/>
            <person name="Adams P.D."/>
            <person name="Ronald P.C."/>
            <person name="Hillson N.J."/>
            <person name="Hadi M.Z."/>
            <person name="Vega-Sanchez M.E."/>
            <person name="Loque D."/>
            <person name="Scheller H.V."/>
            <person name="Heazlewood J.L."/>
        </authorList>
    </citation>
    <scope>NUCLEOTIDE SEQUENCE [MRNA]</scope>
    <source>
        <strain>cv. Columbia</strain>
    </source>
</reference>
<reference key="2">
    <citation type="journal article" date="2000" name="Nature">
        <title>Sequence and analysis of chromosome 3 of the plant Arabidopsis thaliana.</title>
        <authorList>
            <person name="Salanoubat M."/>
            <person name="Lemcke K."/>
            <person name="Rieger M."/>
            <person name="Ansorge W."/>
            <person name="Unseld M."/>
            <person name="Fartmann B."/>
            <person name="Valle G."/>
            <person name="Bloecker H."/>
            <person name="Perez-Alonso M."/>
            <person name="Obermaier B."/>
            <person name="Delseny M."/>
            <person name="Boutry M."/>
            <person name="Grivell L.A."/>
            <person name="Mache R."/>
            <person name="Puigdomenech P."/>
            <person name="De Simone V."/>
            <person name="Choisne N."/>
            <person name="Artiguenave F."/>
            <person name="Robert C."/>
            <person name="Brottier P."/>
            <person name="Wincker P."/>
            <person name="Cattolico L."/>
            <person name="Weissenbach J."/>
            <person name="Saurin W."/>
            <person name="Quetier F."/>
            <person name="Schaefer M."/>
            <person name="Mueller-Auer S."/>
            <person name="Gabel C."/>
            <person name="Fuchs M."/>
            <person name="Benes V."/>
            <person name="Wurmbach E."/>
            <person name="Drzonek H."/>
            <person name="Erfle H."/>
            <person name="Jordan N."/>
            <person name="Bangert S."/>
            <person name="Wiedelmann R."/>
            <person name="Kranz H."/>
            <person name="Voss H."/>
            <person name="Holland R."/>
            <person name="Brandt P."/>
            <person name="Nyakatura G."/>
            <person name="Vezzi A."/>
            <person name="D'Angelo M."/>
            <person name="Pallavicini A."/>
            <person name="Toppo S."/>
            <person name="Simionati B."/>
            <person name="Conrad A."/>
            <person name="Hornischer K."/>
            <person name="Kauer G."/>
            <person name="Loehnert T.-H."/>
            <person name="Nordsiek G."/>
            <person name="Reichelt J."/>
            <person name="Scharfe M."/>
            <person name="Schoen O."/>
            <person name="Bargues M."/>
            <person name="Terol J."/>
            <person name="Climent J."/>
            <person name="Navarro P."/>
            <person name="Collado C."/>
            <person name="Perez-Perez A."/>
            <person name="Ottenwaelder B."/>
            <person name="Duchemin D."/>
            <person name="Cooke R."/>
            <person name="Laudie M."/>
            <person name="Berger-Llauro C."/>
            <person name="Purnelle B."/>
            <person name="Masuy D."/>
            <person name="de Haan M."/>
            <person name="Maarse A.C."/>
            <person name="Alcaraz J.-P."/>
            <person name="Cottet A."/>
            <person name="Casacuberta E."/>
            <person name="Monfort A."/>
            <person name="Argiriou A."/>
            <person name="Flores M."/>
            <person name="Liguori R."/>
            <person name="Vitale D."/>
            <person name="Mannhaupt G."/>
            <person name="Haase D."/>
            <person name="Schoof H."/>
            <person name="Rudd S."/>
            <person name="Zaccaria P."/>
            <person name="Mewes H.-W."/>
            <person name="Mayer K.F.X."/>
            <person name="Kaul S."/>
            <person name="Town C.D."/>
            <person name="Koo H.L."/>
            <person name="Tallon L.J."/>
            <person name="Jenkins J."/>
            <person name="Rooney T."/>
            <person name="Rizzo M."/>
            <person name="Walts A."/>
            <person name="Utterback T."/>
            <person name="Fujii C.Y."/>
            <person name="Shea T.P."/>
            <person name="Creasy T.H."/>
            <person name="Haas B."/>
            <person name="Maiti R."/>
            <person name="Wu D."/>
            <person name="Peterson J."/>
            <person name="Van Aken S."/>
            <person name="Pai G."/>
            <person name="Militscher J."/>
            <person name="Sellers P."/>
            <person name="Gill J.E."/>
            <person name="Feldblyum T.V."/>
            <person name="Preuss D."/>
            <person name="Lin X."/>
            <person name="Nierman W.C."/>
            <person name="Salzberg S.L."/>
            <person name="White O."/>
            <person name="Venter J.C."/>
            <person name="Fraser C.M."/>
            <person name="Kaneko T."/>
            <person name="Nakamura Y."/>
            <person name="Sato S."/>
            <person name="Kato T."/>
            <person name="Asamizu E."/>
            <person name="Sasamoto S."/>
            <person name="Kimura T."/>
            <person name="Idesawa K."/>
            <person name="Kawashima K."/>
            <person name="Kishida Y."/>
            <person name="Kiyokawa C."/>
            <person name="Kohara M."/>
            <person name="Matsumoto M."/>
            <person name="Matsuno A."/>
            <person name="Muraki A."/>
            <person name="Nakayama S."/>
            <person name="Nakazaki N."/>
            <person name="Shinpo S."/>
            <person name="Takeuchi C."/>
            <person name="Wada T."/>
            <person name="Watanabe A."/>
            <person name="Yamada M."/>
            <person name="Yasuda M."/>
            <person name="Tabata S."/>
        </authorList>
    </citation>
    <scope>NUCLEOTIDE SEQUENCE [LARGE SCALE GENOMIC DNA]</scope>
    <source>
        <strain>cv. Columbia</strain>
    </source>
</reference>
<reference key="3">
    <citation type="journal article" date="2017" name="Plant J.">
        <title>Araport11: a complete reannotation of the Arabidopsis thaliana reference genome.</title>
        <authorList>
            <person name="Cheng C.Y."/>
            <person name="Krishnakumar V."/>
            <person name="Chan A.P."/>
            <person name="Thibaud-Nissen F."/>
            <person name="Schobel S."/>
            <person name="Town C.D."/>
        </authorList>
    </citation>
    <scope>GENOME REANNOTATION</scope>
    <source>
        <strain>cv. Columbia</strain>
    </source>
</reference>
<reference key="4">
    <citation type="submission" date="2004-10" db="EMBL/GenBank/DDBJ databases">
        <title>Arabidopsis ORF clones.</title>
        <authorList>
            <person name="Shinn P."/>
            <person name="Chen H."/>
            <person name="Cheuk R.F."/>
            <person name="Kim C.J."/>
            <person name="Ecker J.R."/>
        </authorList>
    </citation>
    <scope>NUCLEOTIDE SEQUENCE [LARGE SCALE MRNA]</scope>
    <source>
        <strain>cv. Columbia</strain>
    </source>
</reference>
<reference key="5">
    <citation type="journal article" date="2001" name="J. Biol. Chem.">
        <title>Phylogenetic analysis of the UDP-glycosyltransferase multigene family of Arabidopsis thaliana.</title>
        <authorList>
            <person name="Li Y."/>
            <person name="Baldauf S."/>
            <person name="Lim E.K."/>
            <person name="Bowles D.J."/>
        </authorList>
    </citation>
    <scope>GENE FAMILY</scope>
</reference>
<reference key="6">
    <citation type="journal article" date="2005" name="FEBS Lett.">
        <title>Identification and characterisation of Arabidopsis glycosyltransferases capable of glucosylating coniferyl aldehyde and sinapyl aldehyde.</title>
        <authorList>
            <person name="Lim E.K."/>
            <person name="Jackson R.G."/>
            <person name="Bowles D.J."/>
        </authorList>
    </citation>
    <scope>FUNCTION</scope>
    <scope>CATALYTIC ACTIVITY</scope>
    <scope>BIOPHYSICOCHEMICAL PROPERTIES</scope>
</reference>
<reference key="7">
    <citation type="journal article" date="2006" name="Plant J.">
        <title>The glucosyltransferase UGT72E2 is responsible for monolignol 4-O-glucoside production in Arabidopsis thaliana.</title>
        <authorList>
            <person name="Lanot A."/>
            <person name="Hodge D."/>
            <person name="Jackson R.G."/>
            <person name="George G.L."/>
            <person name="Elias L."/>
            <person name="Lim E.K."/>
            <person name="Vaistij F.E."/>
            <person name="Bowles D.J."/>
        </authorList>
    </citation>
    <scope>TISSUE SPECIFICITY</scope>
</reference>
<reference key="8">
    <citation type="journal article" date="2014" name="Plant J.">
        <title>SIS8, a putative mitogen-activated protein kinase kinase kinase, regulates sugar-resistant seedling development in Arabidopsis.</title>
        <authorList>
            <person name="Huang Y."/>
            <person name="Li C.Y."/>
            <person name="Qi Y."/>
            <person name="Park S."/>
            <person name="Gibson S.I."/>
        </authorList>
    </citation>
    <scope>INTERACTION WITH SIS8</scope>
    <scope>SUBCELLULAR LOCATION</scope>
    <scope>DISRUPTION PHENOTYPE</scope>
</reference>
<protein>
    <recommendedName>
        <fullName evidence="6">UDP-glycosyltransferase 72E1</fullName>
        <ecNumber evidence="3">2.4.1.-</ecNumber>
    </recommendedName>
</protein>
<sequence>MKITKPHVAMFASPGMGHIIPVIELGKRLAGSHGFDVTIFVLETDAASAQSQFLNSPGCDAALVDIVGLPTPDISGLVDPSAFFGIKLLVMMRETIPTIRSKIEEMQHKPTALIVDLFGLDAIPLGGEFNMLTYIFIASNARFLAVALFFPTLDKDMEEEHIIKKQPMVMPGCEPVRFEDTLETFLDPNSQLYREFVPFGSVFPTCDGIIVNTWDDMEPKTLKSLQDPKLLGRIAGVPVYPIGPLSRPVDPSKTNHPVLDWLNKQPDESVLYISFGSGGSLSAKQLTELAWGLEMSQQRFVWVVRPPVDGSACSAYLSANSGKIRDGTPDYLPEGFVSRTHERGFMVSSWAPQAEILAHQAVGGFLTHCGWNSILESVVGGVPMIAWPLFAEQMMNATLLNEELGVAVRSKKLPSEGVITRAEIEALVRKIMVEEEGAEMRKKIKKLKETAAESLSCDGGVAHESLSRIADESEHLLERVRCMARGA</sequence>
<keyword id="KW-0216">Detoxification</keyword>
<keyword id="KW-0328">Glycosyltransferase</keyword>
<keyword id="KW-0539">Nucleus</keyword>
<keyword id="KW-1185">Reference proteome</keyword>
<keyword id="KW-0808">Transferase</keyword>
<name>U72E1_ARATH</name>